<name>ISDC_STAAT</name>
<feature type="signal peptide" evidence="3">
    <location>
        <begin position="1"/>
        <end position="28"/>
    </location>
</feature>
<feature type="chain" id="PRO_0000333252" description="Iron-regulated surface determinant protein C">
    <location>
        <begin position="29"/>
        <end position="192"/>
    </location>
</feature>
<feature type="propeptide" id="PRO_0000333253" description="Removed by sortase B" evidence="2">
    <location>
        <begin position="193"/>
        <end position="227"/>
    </location>
</feature>
<feature type="domain" description="NEAT" evidence="4">
    <location>
        <begin position="29"/>
        <end position="150"/>
    </location>
</feature>
<feature type="region of interest" description="Disordered" evidence="5">
    <location>
        <begin position="149"/>
        <end position="191"/>
    </location>
</feature>
<feature type="short sequence motif" description="NPQTN sorting signal" evidence="2">
    <location>
        <begin position="189"/>
        <end position="193"/>
    </location>
</feature>
<feature type="compositionally biased region" description="Low complexity" evidence="5">
    <location>
        <begin position="161"/>
        <end position="175"/>
    </location>
</feature>
<feature type="binding site" evidence="2">
    <location>
        <position position="47"/>
    </location>
    <ligand>
        <name>heme</name>
        <dbReference type="ChEBI" id="CHEBI:30413"/>
    </ligand>
</feature>
<feature type="binding site" evidence="2">
    <location>
        <position position="48"/>
    </location>
    <ligand>
        <name>heme</name>
        <dbReference type="ChEBI" id="CHEBI:30413"/>
    </ligand>
</feature>
<feature type="binding site" description="axial binding residue" evidence="1">
    <location>
        <position position="132"/>
    </location>
    <ligand>
        <name>heme</name>
        <dbReference type="ChEBI" id="CHEBI:30413"/>
    </ligand>
    <ligandPart>
        <name>Fe</name>
        <dbReference type="ChEBI" id="CHEBI:18248"/>
    </ligandPart>
</feature>
<feature type="binding site" evidence="2">
    <location>
        <position position="136"/>
    </location>
    <ligand>
        <name>heme</name>
        <dbReference type="ChEBI" id="CHEBI:30413"/>
    </ligand>
</feature>
<feature type="modified residue" description="Pentaglycyl murein peptidoglycan amidated threonine" evidence="2">
    <location>
        <position position="192"/>
    </location>
</feature>
<gene>
    <name type="primary">isdC</name>
    <name type="synonym">sirD</name>
    <name type="ordered locus">USA300HOU_1065</name>
</gene>
<comment type="function">
    <text evidence="1">Involved in heme (porphyrin) scavenging. Binds hemoglobin and almost exclusively free-base protoporphyrin IX. Probably has a role as the central conduit of the isd heme uptake system, i.e. mediates the transfer of the iron-containing nutrient from IsdABH to the membrane translocation system IsdDEF. Hemin-free IsdC (apo-IsdC) acquires hemin from hemin-containing IsdA (holo-IsdA) probably through the activated holo-IsdA-apo-IsdC complex and due to the higher affinity of apo-IsdC for the cofactor. The reaction is reversible (By similarity).</text>
</comment>
<comment type="subunit">
    <text evidence="1">Monomer. Interacts with IsdA (By similarity).</text>
</comment>
<comment type="subcellular location">
    <subcellularLocation>
        <location evidence="1">Secreted</location>
        <location evidence="1">Cell wall</location>
        <topology evidence="1">Peptidoglycan-anchor</topology>
    </subcellularLocation>
    <text evidence="2">Anchored to the cell wall by sortase B (By similarity).</text>
</comment>
<comment type="induction">
    <text evidence="1">Repressed by fur in the presence of iron.</text>
</comment>
<comment type="domain">
    <text evidence="1">The NEAT domain binds Fe(3+) heme iron. Reduction of the high-spin Fe(3+) heme iron to high-spin Fe(2+) results in loss of the heme from the binding site of the protein due to the absence of a proximal histidine (By similarity).</text>
</comment>
<comment type="similarity">
    <text evidence="6">Belongs to the IsdC family.</text>
</comment>
<sequence>MKNILKVFNTTILALIIIIATFSNSANAADSGTLNYEVYKYNTNDTSIANDYFNKPAKYIKKNGKLYVQITVNHSHWITGMSIEGHKENIISKNTAKDERTSEFEVSKLNGKIDGKIDVYIDEKVNGKPFKYDHHYNITYKFNGPTDVAGANAPGKDDKNSASGSDKGSDGTTTGQSESNSSNKDKVENPQTNAGTPAYIYAIPVASLALLIAITLFVRKKSKGNVE</sequence>
<reference key="1">
    <citation type="journal article" date="2007" name="BMC Microbiol.">
        <title>Subtle genetic changes enhance virulence of methicillin resistant and sensitive Staphylococcus aureus.</title>
        <authorList>
            <person name="Highlander S.K."/>
            <person name="Hulten K.G."/>
            <person name="Qin X."/>
            <person name="Jiang H."/>
            <person name="Yerrapragada S."/>
            <person name="Mason E.O. Jr."/>
            <person name="Shang Y."/>
            <person name="Williams T.M."/>
            <person name="Fortunov R.M."/>
            <person name="Liu Y."/>
            <person name="Igboeli O."/>
            <person name="Petrosino J."/>
            <person name="Tirumalai M."/>
            <person name="Uzman A."/>
            <person name="Fox G.E."/>
            <person name="Cardenas A.M."/>
            <person name="Muzny D.M."/>
            <person name="Hemphill L."/>
            <person name="Ding Y."/>
            <person name="Dugan S."/>
            <person name="Blyth P.R."/>
            <person name="Buhay C.J."/>
            <person name="Dinh H.H."/>
            <person name="Hawes A.C."/>
            <person name="Holder M."/>
            <person name="Kovar C.L."/>
            <person name="Lee S.L."/>
            <person name="Liu W."/>
            <person name="Nazareth L.V."/>
            <person name="Wang Q."/>
            <person name="Zhou J."/>
            <person name="Kaplan S.L."/>
            <person name="Weinstock G.M."/>
        </authorList>
    </citation>
    <scope>NUCLEOTIDE SEQUENCE [LARGE SCALE GENOMIC DNA]</scope>
    <source>
        <strain>USA300 / TCH1516</strain>
    </source>
</reference>
<accession>A8Z1R1</accession>
<evidence type="ECO:0000250" key="1"/>
<evidence type="ECO:0000250" key="2">
    <source>
        <dbReference type="UniProtKB" id="Q8KQR1"/>
    </source>
</evidence>
<evidence type="ECO:0000255" key="3"/>
<evidence type="ECO:0000255" key="4">
    <source>
        <dbReference type="PROSITE-ProRule" id="PRU00337"/>
    </source>
</evidence>
<evidence type="ECO:0000256" key="5">
    <source>
        <dbReference type="SAM" id="MobiDB-lite"/>
    </source>
</evidence>
<evidence type="ECO:0000305" key="6"/>
<protein>
    <recommendedName>
        <fullName>Iron-regulated surface determinant protein C</fullName>
    </recommendedName>
    <alternativeName>
        <fullName>Staphylococcal iron-regulated protein D</fullName>
    </alternativeName>
</protein>
<keyword id="KW-0134">Cell wall</keyword>
<keyword id="KW-0349">Heme</keyword>
<keyword id="KW-0408">Iron</keyword>
<keyword id="KW-0479">Metal-binding</keyword>
<keyword id="KW-0572">Peptidoglycan-anchor</keyword>
<keyword id="KW-0964">Secreted</keyword>
<keyword id="KW-0732">Signal</keyword>
<organism>
    <name type="scientific">Staphylococcus aureus (strain USA300 / TCH1516)</name>
    <dbReference type="NCBI Taxonomy" id="451516"/>
    <lineage>
        <taxon>Bacteria</taxon>
        <taxon>Bacillati</taxon>
        <taxon>Bacillota</taxon>
        <taxon>Bacilli</taxon>
        <taxon>Bacillales</taxon>
        <taxon>Staphylococcaceae</taxon>
        <taxon>Staphylococcus</taxon>
    </lineage>
</organism>
<dbReference type="EMBL" id="CP000730">
    <property type="protein sequence ID" value="ABX29084.1"/>
    <property type="molecule type" value="Genomic_DNA"/>
</dbReference>
<dbReference type="RefSeq" id="WP_000789821.1">
    <property type="nucleotide sequence ID" value="NC_010079.1"/>
</dbReference>
<dbReference type="BMRB" id="A8Z1R1"/>
<dbReference type="SMR" id="A8Z1R1"/>
<dbReference type="KEGG" id="sax:USA300HOU_1065"/>
<dbReference type="HOGENOM" id="CLU_092243_1_0_9"/>
<dbReference type="GO" id="GO:0005576">
    <property type="term" value="C:extracellular region"/>
    <property type="evidence" value="ECO:0007669"/>
    <property type="project" value="UniProtKB-KW"/>
</dbReference>
<dbReference type="GO" id="GO:0009274">
    <property type="term" value="C:peptidoglycan-based cell wall"/>
    <property type="evidence" value="ECO:0007669"/>
    <property type="project" value="InterPro"/>
</dbReference>
<dbReference type="GO" id="GO:0030492">
    <property type="term" value="F:hemoglobin binding"/>
    <property type="evidence" value="ECO:0007669"/>
    <property type="project" value="InterPro"/>
</dbReference>
<dbReference type="GO" id="GO:0046872">
    <property type="term" value="F:metal ion binding"/>
    <property type="evidence" value="ECO:0007669"/>
    <property type="project" value="UniProtKB-KW"/>
</dbReference>
<dbReference type="GO" id="GO:0015886">
    <property type="term" value="P:heme transport"/>
    <property type="evidence" value="ECO:0007669"/>
    <property type="project" value="InterPro"/>
</dbReference>
<dbReference type="CDD" id="cd06920">
    <property type="entry name" value="NEAT"/>
    <property type="match status" value="1"/>
</dbReference>
<dbReference type="Gene3D" id="2.60.40.1850">
    <property type="match status" value="1"/>
</dbReference>
<dbReference type="InterPro" id="IPR019909">
    <property type="entry name" value="Haem_uptake_protein_IsdC"/>
</dbReference>
<dbReference type="InterPro" id="IPR050436">
    <property type="entry name" value="IsdA"/>
</dbReference>
<dbReference type="InterPro" id="IPR006635">
    <property type="entry name" value="NEAT_dom"/>
</dbReference>
<dbReference type="InterPro" id="IPR037250">
    <property type="entry name" value="NEAT_dom_sf"/>
</dbReference>
<dbReference type="InterPro" id="IPR017505">
    <property type="entry name" value="Sortase_SrtB_sig_NPQTN"/>
</dbReference>
<dbReference type="NCBIfam" id="TIGR03656">
    <property type="entry name" value="IsdC"/>
    <property type="match status" value="1"/>
</dbReference>
<dbReference type="NCBIfam" id="TIGR03068">
    <property type="entry name" value="srtB_sig_NPQTN"/>
    <property type="match status" value="1"/>
</dbReference>
<dbReference type="PANTHER" id="PTHR37824">
    <property type="entry name" value="IRON-REGULATED SURFACE DETERMINANT PROTEIN C"/>
    <property type="match status" value="1"/>
</dbReference>
<dbReference type="PANTHER" id="PTHR37824:SF1">
    <property type="entry name" value="IRON-REGULATED SURFACE DETERMINANT PROTEIN C"/>
    <property type="match status" value="1"/>
</dbReference>
<dbReference type="Pfam" id="PF05031">
    <property type="entry name" value="NEAT"/>
    <property type="match status" value="1"/>
</dbReference>
<dbReference type="SMART" id="SM00725">
    <property type="entry name" value="NEAT"/>
    <property type="match status" value="1"/>
</dbReference>
<dbReference type="SUPFAM" id="SSF158911">
    <property type="entry name" value="NEAT domain-like"/>
    <property type="match status" value="1"/>
</dbReference>
<dbReference type="PROSITE" id="PS50978">
    <property type="entry name" value="NEAT"/>
    <property type="match status" value="1"/>
</dbReference>
<proteinExistence type="inferred from homology"/>